<proteinExistence type="inferred from homology"/>
<evidence type="ECO:0000255" key="1">
    <source>
        <dbReference type="HAMAP-Rule" id="MF_00146"/>
    </source>
</evidence>
<evidence type="ECO:0000256" key="2">
    <source>
        <dbReference type="SAM" id="MobiDB-lite"/>
    </source>
</evidence>
<comment type="function">
    <text evidence="1">Catalyzes the deamination of dCTP to dUTP.</text>
</comment>
<comment type="catalytic activity">
    <reaction evidence="1">
        <text>dCTP + H2O + H(+) = dUTP + NH4(+)</text>
        <dbReference type="Rhea" id="RHEA:22680"/>
        <dbReference type="ChEBI" id="CHEBI:15377"/>
        <dbReference type="ChEBI" id="CHEBI:15378"/>
        <dbReference type="ChEBI" id="CHEBI:28938"/>
        <dbReference type="ChEBI" id="CHEBI:61481"/>
        <dbReference type="ChEBI" id="CHEBI:61555"/>
        <dbReference type="EC" id="3.5.4.13"/>
    </reaction>
</comment>
<comment type="pathway">
    <text evidence="1">Pyrimidine metabolism; dUMP biosynthesis; dUMP from dCTP (dUTP route): step 1/2.</text>
</comment>
<comment type="subunit">
    <text evidence="1">Homotrimer.</text>
</comment>
<comment type="similarity">
    <text evidence="1">Belongs to the dCTP deaminase family.</text>
</comment>
<sequence>MRLCDRDIEAWLDEGRLSITPRPPVERINGATVDVRLGNKFRTFRGHTAAFIDLSGPKDEVSAALDRVMSDEIVLPDGEAFYLHPGELALAVTFESVTLPPDLVGWLDGRSSLARLGLMVHVTAHRIDPGWSGCIVLEFYNSGKLPLALRPGMLIGALSFEPLSGPAARPYNRRQDAKYRDQQGAVASRIDKD</sequence>
<organism>
    <name type="scientific">Salmonella enteritidis PT4 (strain P125109)</name>
    <dbReference type="NCBI Taxonomy" id="550537"/>
    <lineage>
        <taxon>Bacteria</taxon>
        <taxon>Pseudomonadati</taxon>
        <taxon>Pseudomonadota</taxon>
        <taxon>Gammaproteobacteria</taxon>
        <taxon>Enterobacterales</taxon>
        <taxon>Enterobacteriaceae</taxon>
        <taxon>Salmonella</taxon>
    </lineage>
</organism>
<name>DCD_SALEP</name>
<keyword id="KW-0378">Hydrolase</keyword>
<keyword id="KW-0546">Nucleotide metabolism</keyword>
<keyword id="KW-0547">Nucleotide-binding</keyword>
<gene>
    <name evidence="1" type="primary">dcd</name>
    <name type="ordered locus">SEN2117</name>
</gene>
<reference key="1">
    <citation type="journal article" date="2008" name="Genome Res.">
        <title>Comparative genome analysis of Salmonella enteritidis PT4 and Salmonella gallinarum 287/91 provides insights into evolutionary and host adaptation pathways.</title>
        <authorList>
            <person name="Thomson N.R."/>
            <person name="Clayton D.J."/>
            <person name="Windhorst D."/>
            <person name="Vernikos G."/>
            <person name="Davidson S."/>
            <person name="Churcher C."/>
            <person name="Quail M.A."/>
            <person name="Stevens M."/>
            <person name="Jones M.A."/>
            <person name="Watson M."/>
            <person name="Barron A."/>
            <person name="Layton A."/>
            <person name="Pickard D."/>
            <person name="Kingsley R.A."/>
            <person name="Bignell A."/>
            <person name="Clark L."/>
            <person name="Harris B."/>
            <person name="Ormond D."/>
            <person name="Abdellah Z."/>
            <person name="Brooks K."/>
            <person name="Cherevach I."/>
            <person name="Chillingworth T."/>
            <person name="Woodward J."/>
            <person name="Norberczak H."/>
            <person name="Lord A."/>
            <person name="Arrowsmith C."/>
            <person name="Jagels K."/>
            <person name="Moule S."/>
            <person name="Mungall K."/>
            <person name="Saunders M."/>
            <person name="Whitehead S."/>
            <person name="Chabalgoity J.A."/>
            <person name="Maskell D."/>
            <person name="Humphreys T."/>
            <person name="Roberts M."/>
            <person name="Barrow P.A."/>
            <person name="Dougan G."/>
            <person name="Parkhill J."/>
        </authorList>
    </citation>
    <scope>NUCLEOTIDE SEQUENCE [LARGE SCALE GENOMIC DNA]</scope>
    <source>
        <strain>P125109</strain>
    </source>
</reference>
<accession>B5R0B4</accession>
<protein>
    <recommendedName>
        <fullName evidence="1">dCTP deaminase</fullName>
        <ecNumber evidence="1">3.5.4.13</ecNumber>
    </recommendedName>
    <alternativeName>
        <fullName evidence="1">Deoxycytidine triphosphate deaminase</fullName>
    </alternativeName>
</protein>
<dbReference type="EC" id="3.5.4.13" evidence="1"/>
<dbReference type="EMBL" id="AM933172">
    <property type="protein sequence ID" value="CAR33700.1"/>
    <property type="molecule type" value="Genomic_DNA"/>
</dbReference>
<dbReference type="RefSeq" id="WP_001234783.1">
    <property type="nucleotide sequence ID" value="NC_011294.1"/>
</dbReference>
<dbReference type="SMR" id="B5R0B4"/>
<dbReference type="KEGG" id="set:SEN2117"/>
<dbReference type="HOGENOM" id="CLU_087476_2_0_6"/>
<dbReference type="UniPathway" id="UPA00610">
    <property type="reaction ID" value="UER00665"/>
</dbReference>
<dbReference type="Proteomes" id="UP000000613">
    <property type="component" value="Chromosome"/>
</dbReference>
<dbReference type="GO" id="GO:0008829">
    <property type="term" value="F:dCTP deaminase activity"/>
    <property type="evidence" value="ECO:0007669"/>
    <property type="project" value="UniProtKB-UniRule"/>
</dbReference>
<dbReference type="GO" id="GO:0000166">
    <property type="term" value="F:nucleotide binding"/>
    <property type="evidence" value="ECO:0007669"/>
    <property type="project" value="UniProtKB-KW"/>
</dbReference>
<dbReference type="GO" id="GO:0006226">
    <property type="term" value="P:dUMP biosynthetic process"/>
    <property type="evidence" value="ECO:0007669"/>
    <property type="project" value="UniProtKB-UniPathway"/>
</dbReference>
<dbReference type="GO" id="GO:0006229">
    <property type="term" value="P:dUTP biosynthetic process"/>
    <property type="evidence" value="ECO:0007669"/>
    <property type="project" value="UniProtKB-UniRule"/>
</dbReference>
<dbReference type="GO" id="GO:0015949">
    <property type="term" value="P:nucleobase-containing small molecule interconversion"/>
    <property type="evidence" value="ECO:0007669"/>
    <property type="project" value="TreeGrafter"/>
</dbReference>
<dbReference type="CDD" id="cd07557">
    <property type="entry name" value="trimeric_dUTPase"/>
    <property type="match status" value="1"/>
</dbReference>
<dbReference type="FunFam" id="2.70.40.10:FF:000003">
    <property type="entry name" value="dCTP deaminase"/>
    <property type="match status" value="1"/>
</dbReference>
<dbReference type="Gene3D" id="2.70.40.10">
    <property type="match status" value="1"/>
</dbReference>
<dbReference type="HAMAP" id="MF_00146">
    <property type="entry name" value="dCTP_deaminase"/>
    <property type="match status" value="1"/>
</dbReference>
<dbReference type="InterPro" id="IPR011962">
    <property type="entry name" value="dCTP_deaminase"/>
</dbReference>
<dbReference type="InterPro" id="IPR036157">
    <property type="entry name" value="dUTPase-like_sf"/>
</dbReference>
<dbReference type="InterPro" id="IPR033704">
    <property type="entry name" value="dUTPase_trimeric"/>
</dbReference>
<dbReference type="NCBIfam" id="TIGR02274">
    <property type="entry name" value="dCTP_deam"/>
    <property type="match status" value="1"/>
</dbReference>
<dbReference type="PANTHER" id="PTHR42680">
    <property type="entry name" value="DCTP DEAMINASE"/>
    <property type="match status" value="1"/>
</dbReference>
<dbReference type="PANTHER" id="PTHR42680:SF3">
    <property type="entry name" value="DCTP DEAMINASE"/>
    <property type="match status" value="1"/>
</dbReference>
<dbReference type="Pfam" id="PF22769">
    <property type="entry name" value="DCD"/>
    <property type="match status" value="1"/>
</dbReference>
<dbReference type="SUPFAM" id="SSF51283">
    <property type="entry name" value="dUTPase-like"/>
    <property type="match status" value="1"/>
</dbReference>
<feature type="chain" id="PRO_1000096448" description="dCTP deaminase">
    <location>
        <begin position="1"/>
        <end position="193"/>
    </location>
</feature>
<feature type="region of interest" description="Disordered" evidence="2">
    <location>
        <begin position="169"/>
        <end position="193"/>
    </location>
</feature>
<feature type="active site" description="Proton donor/acceptor" evidence="1">
    <location>
        <position position="138"/>
    </location>
</feature>
<feature type="binding site" evidence="1">
    <location>
        <begin position="110"/>
        <end position="115"/>
    </location>
    <ligand>
        <name>dCTP</name>
        <dbReference type="ChEBI" id="CHEBI:61481"/>
    </ligand>
</feature>
<feature type="binding site" evidence="1">
    <location>
        <position position="128"/>
    </location>
    <ligand>
        <name>dCTP</name>
        <dbReference type="ChEBI" id="CHEBI:61481"/>
    </ligand>
</feature>
<feature type="binding site" evidence="1">
    <location>
        <begin position="136"/>
        <end position="138"/>
    </location>
    <ligand>
        <name>dCTP</name>
        <dbReference type="ChEBI" id="CHEBI:61481"/>
    </ligand>
</feature>
<feature type="binding site" evidence="1">
    <location>
        <position position="171"/>
    </location>
    <ligand>
        <name>dCTP</name>
        <dbReference type="ChEBI" id="CHEBI:61481"/>
    </ligand>
</feature>
<feature type="binding site" evidence="1">
    <location>
        <position position="178"/>
    </location>
    <ligand>
        <name>dCTP</name>
        <dbReference type="ChEBI" id="CHEBI:61481"/>
    </ligand>
</feature>
<feature type="binding site" evidence="1">
    <location>
        <position position="182"/>
    </location>
    <ligand>
        <name>dCTP</name>
        <dbReference type="ChEBI" id="CHEBI:61481"/>
    </ligand>
</feature>